<comment type="catalytic activity">
    <reaction evidence="1">
        <text>2-(N(omega)-L-arginino)succinate = fumarate + L-arginine</text>
        <dbReference type="Rhea" id="RHEA:24020"/>
        <dbReference type="ChEBI" id="CHEBI:29806"/>
        <dbReference type="ChEBI" id="CHEBI:32682"/>
        <dbReference type="ChEBI" id="CHEBI:57472"/>
        <dbReference type="EC" id="4.3.2.1"/>
    </reaction>
</comment>
<comment type="pathway">
    <text evidence="1">Amino-acid biosynthesis; L-arginine biosynthesis; L-arginine from L-ornithine and carbamoyl phosphate: step 3/3.</text>
</comment>
<comment type="subcellular location">
    <subcellularLocation>
        <location evidence="1">Cytoplasm</location>
    </subcellularLocation>
</comment>
<comment type="similarity">
    <text evidence="1">Belongs to the lyase 1 family. Argininosuccinate lyase subfamily.</text>
</comment>
<sequence>MQDSHAWSGRFSEPVSELVKHYTASIGFDYRLAEVDIEGSLAHAAMLNRSGVLSDADLEAIRRGMADILDEIRAGKLEWSVDLEDVHMNIERRLTDRIGDAGKRLHTGRSRNDQVATDIRLWLRGEIDATVHLLAGLQSSLLELAERHADTVMPGFTHLQVAQPVTFGHHLLAYVEMLARDAERMLDCRKRVNRLPLGAAALAGTTYPIDRHYTAQLLGFDDVCHNSLDAVSDRDFAIEFTAAASLAMLHLSRLSEELILWMSPRVGFIDIADRFCTGSSIMPQKKNPDVPELVRGKSGRVVGHLIALITLMKAQPLAYNKDNQEDKEPLFDTVDTLQTTLRIYADMMRGVTVKPEAMRAAVLQGYATATDLADYLVKKGLPFRDSHEVVALAVRHAEGLGVDLADLPLAKLREFSALIEDDVFGVLTPEGSLAQRDHVGGTAPAQVRAQIARHRGRLG</sequence>
<gene>
    <name evidence="1" type="primary">argH</name>
    <name type="ordered locus">CV_0115</name>
</gene>
<proteinExistence type="inferred from homology"/>
<protein>
    <recommendedName>
        <fullName evidence="1">Argininosuccinate lyase</fullName>
        <shortName evidence="1">ASAL</shortName>
        <ecNumber evidence="1">4.3.2.1</ecNumber>
    </recommendedName>
    <alternativeName>
        <fullName evidence="1">Arginosuccinase</fullName>
    </alternativeName>
</protein>
<name>ARLY_CHRVO</name>
<accession>Q7P1U7</accession>
<feature type="chain" id="PRO_0000137758" description="Argininosuccinate lyase">
    <location>
        <begin position="1"/>
        <end position="459"/>
    </location>
</feature>
<dbReference type="EC" id="4.3.2.1" evidence="1"/>
<dbReference type="EMBL" id="AE016825">
    <property type="protein sequence ID" value="AAQ57794.1"/>
    <property type="molecule type" value="Genomic_DNA"/>
</dbReference>
<dbReference type="RefSeq" id="WP_011133670.1">
    <property type="nucleotide sequence ID" value="NC_005085.1"/>
</dbReference>
<dbReference type="SMR" id="Q7P1U7"/>
<dbReference type="STRING" id="243365.CV_0115"/>
<dbReference type="GeneID" id="66365990"/>
<dbReference type="KEGG" id="cvi:CV_0115"/>
<dbReference type="eggNOG" id="COG0165">
    <property type="taxonomic scope" value="Bacteria"/>
</dbReference>
<dbReference type="HOGENOM" id="CLU_027272_2_3_4"/>
<dbReference type="OrthoDB" id="9769623at2"/>
<dbReference type="UniPathway" id="UPA00068">
    <property type="reaction ID" value="UER00114"/>
</dbReference>
<dbReference type="Proteomes" id="UP000001424">
    <property type="component" value="Chromosome"/>
</dbReference>
<dbReference type="GO" id="GO:0005829">
    <property type="term" value="C:cytosol"/>
    <property type="evidence" value="ECO:0007669"/>
    <property type="project" value="TreeGrafter"/>
</dbReference>
<dbReference type="GO" id="GO:0004056">
    <property type="term" value="F:argininosuccinate lyase activity"/>
    <property type="evidence" value="ECO:0007669"/>
    <property type="project" value="UniProtKB-UniRule"/>
</dbReference>
<dbReference type="GO" id="GO:0042450">
    <property type="term" value="P:arginine biosynthetic process via ornithine"/>
    <property type="evidence" value="ECO:0007669"/>
    <property type="project" value="InterPro"/>
</dbReference>
<dbReference type="GO" id="GO:0006526">
    <property type="term" value="P:L-arginine biosynthetic process"/>
    <property type="evidence" value="ECO:0007669"/>
    <property type="project" value="UniProtKB-UniRule"/>
</dbReference>
<dbReference type="CDD" id="cd01359">
    <property type="entry name" value="Argininosuccinate_lyase"/>
    <property type="match status" value="1"/>
</dbReference>
<dbReference type="FunFam" id="1.10.275.10:FF:000002">
    <property type="entry name" value="Argininosuccinate lyase"/>
    <property type="match status" value="1"/>
</dbReference>
<dbReference type="FunFam" id="1.10.40.30:FF:000001">
    <property type="entry name" value="Argininosuccinate lyase"/>
    <property type="match status" value="1"/>
</dbReference>
<dbReference type="FunFam" id="1.20.200.10:FF:000015">
    <property type="entry name" value="argininosuccinate lyase isoform X2"/>
    <property type="match status" value="1"/>
</dbReference>
<dbReference type="Gene3D" id="1.10.40.30">
    <property type="entry name" value="Fumarase/aspartase (C-terminal domain)"/>
    <property type="match status" value="1"/>
</dbReference>
<dbReference type="Gene3D" id="1.20.200.10">
    <property type="entry name" value="Fumarase/aspartase (Central domain)"/>
    <property type="match status" value="1"/>
</dbReference>
<dbReference type="Gene3D" id="1.10.275.10">
    <property type="entry name" value="Fumarase/aspartase (N-terminal domain)"/>
    <property type="match status" value="1"/>
</dbReference>
<dbReference type="HAMAP" id="MF_00006">
    <property type="entry name" value="Arg_succ_lyase"/>
    <property type="match status" value="1"/>
</dbReference>
<dbReference type="InterPro" id="IPR029419">
    <property type="entry name" value="Arg_succ_lyase_C"/>
</dbReference>
<dbReference type="InterPro" id="IPR009049">
    <property type="entry name" value="Argininosuccinate_lyase"/>
</dbReference>
<dbReference type="InterPro" id="IPR024083">
    <property type="entry name" value="Fumarase/histidase_N"/>
</dbReference>
<dbReference type="InterPro" id="IPR020557">
    <property type="entry name" value="Fumarate_lyase_CS"/>
</dbReference>
<dbReference type="InterPro" id="IPR000362">
    <property type="entry name" value="Fumarate_lyase_fam"/>
</dbReference>
<dbReference type="InterPro" id="IPR022761">
    <property type="entry name" value="Fumarate_lyase_N"/>
</dbReference>
<dbReference type="InterPro" id="IPR008948">
    <property type="entry name" value="L-Aspartase-like"/>
</dbReference>
<dbReference type="NCBIfam" id="TIGR00838">
    <property type="entry name" value="argH"/>
    <property type="match status" value="1"/>
</dbReference>
<dbReference type="PANTHER" id="PTHR43814">
    <property type="entry name" value="ARGININOSUCCINATE LYASE"/>
    <property type="match status" value="1"/>
</dbReference>
<dbReference type="PANTHER" id="PTHR43814:SF1">
    <property type="entry name" value="ARGININOSUCCINATE LYASE"/>
    <property type="match status" value="1"/>
</dbReference>
<dbReference type="Pfam" id="PF14698">
    <property type="entry name" value="ASL_C2"/>
    <property type="match status" value="1"/>
</dbReference>
<dbReference type="Pfam" id="PF00206">
    <property type="entry name" value="Lyase_1"/>
    <property type="match status" value="1"/>
</dbReference>
<dbReference type="PRINTS" id="PR00145">
    <property type="entry name" value="ARGSUCLYASE"/>
</dbReference>
<dbReference type="PRINTS" id="PR00149">
    <property type="entry name" value="FUMRATELYASE"/>
</dbReference>
<dbReference type="SUPFAM" id="SSF48557">
    <property type="entry name" value="L-aspartase-like"/>
    <property type="match status" value="1"/>
</dbReference>
<dbReference type="PROSITE" id="PS00163">
    <property type="entry name" value="FUMARATE_LYASES"/>
    <property type="match status" value="1"/>
</dbReference>
<organism>
    <name type="scientific">Chromobacterium violaceum (strain ATCC 12472 / DSM 30191 / JCM 1249 / CCUG 213 / NBRC 12614 / NCIMB 9131 / NCTC 9757 / MK)</name>
    <dbReference type="NCBI Taxonomy" id="243365"/>
    <lineage>
        <taxon>Bacteria</taxon>
        <taxon>Pseudomonadati</taxon>
        <taxon>Pseudomonadota</taxon>
        <taxon>Betaproteobacteria</taxon>
        <taxon>Neisseriales</taxon>
        <taxon>Chromobacteriaceae</taxon>
        <taxon>Chromobacterium</taxon>
    </lineage>
</organism>
<reference key="1">
    <citation type="journal article" date="2003" name="Proc. Natl. Acad. Sci. U.S.A.">
        <title>The complete genome sequence of Chromobacterium violaceum reveals remarkable and exploitable bacterial adaptability.</title>
        <authorList>
            <person name="Vasconcelos A.T.R."/>
            <person name="de Almeida D.F."/>
            <person name="Hungria M."/>
            <person name="Guimaraes C.T."/>
            <person name="Antonio R.V."/>
            <person name="Almeida F.C."/>
            <person name="de Almeida L.G.P."/>
            <person name="de Almeida R."/>
            <person name="Alves-Gomes J.A."/>
            <person name="Andrade E.M."/>
            <person name="Araripe J."/>
            <person name="de Araujo M.F.F."/>
            <person name="Astolfi-Filho S."/>
            <person name="Azevedo V."/>
            <person name="Baptista A.J."/>
            <person name="Bataus L.A.M."/>
            <person name="Batista J.S."/>
            <person name="Belo A."/>
            <person name="van den Berg C."/>
            <person name="Bogo M."/>
            <person name="Bonatto S."/>
            <person name="Bordignon J."/>
            <person name="Brigido M.M."/>
            <person name="Brito C.A."/>
            <person name="Brocchi M."/>
            <person name="Burity H.A."/>
            <person name="Camargo A.A."/>
            <person name="Cardoso D.D.P."/>
            <person name="Carneiro N.P."/>
            <person name="Carraro D.M."/>
            <person name="Carvalho C.M.B."/>
            <person name="Cascardo J.C.M."/>
            <person name="Cavada B.S."/>
            <person name="Chueire L.M.O."/>
            <person name="Creczynski-Pasa T.B."/>
            <person name="Cunha-Junior N.C."/>
            <person name="Fagundes N."/>
            <person name="Falcao C.L."/>
            <person name="Fantinatti F."/>
            <person name="Farias I.P."/>
            <person name="Felipe M.S.S."/>
            <person name="Ferrari L.P."/>
            <person name="Ferro J.A."/>
            <person name="Ferro M.I.T."/>
            <person name="Franco G.R."/>
            <person name="Freitas N.S.A."/>
            <person name="Furlan L.R."/>
            <person name="Gazzinelli R.T."/>
            <person name="Gomes E.A."/>
            <person name="Goncalves P.R."/>
            <person name="Grangeiro T.B."/>
            <person name="Grattapaglia D."/>
            <person name="Grisard E.C."/>
            <person name="Hanna E.S."/>
            <person name="Jardim S.N."/>
            <person name="Laurino J."/>
            <person name="Leoi L.C.T."/>
            <person name="Lima L.F.A."/>
            <person name="Loureiro M.F."/>
            <person name="Lyra M.C.C.P."/>
            <person name="Madeira H.M.F."/>
            <person name="Manfio G.P."/>
            <person name="Maranhao A.Q."/>
            <person name="Martins W.S."/>
            <person name="di Mauro S.M.Z."/>
            <person name="de Medeiros S.R.B."/>
            <person name="Meissner R.V."/>
            <person name="Moreira M.A.M."/>
            <person name="Nascimento F.F."/>
            <person name="Nicolas M.F."/>
            <person name="Oliveira J.G."/>
            <person name="Oliveira S.C."/>
            <person name="Paixao R.F.C."/>
            <person name="Parente J.A."/>
            <person name="Pedrosa F.O."/>
            <person name="Pena S.D.J."/>
            <person name="Pereira J.O."/>
            <person name="Pereira M."/>
            <person name="Pinto L.S.R.C."/>
            <person name="Pinto L.S."/>
            <person name="Porto J.I.R."/>
            <person name="Potrich D.P."/>
            <person name="Ramalho-Neto C.E."/>
            <person name="Reis A.M.M."/>
            <person name="Rigo L.U."/>
            <person name="Rondinelli E."/>
            <person name="Santos E.B.P."/>
            <person name="Santos F.R."/>
            <person name="Schneider M.P.C."/>
            <person name="Seuanez H.N."/>
            <person name="Silva A.M.R."/>
            <person name="da Silva A.L.C."/>
            <person name="Silva D.W."/>
            <person name="Silva R."/>
            <person name="Simoes I.C."/>
            <person name="Simon D."/>
            <person name="Soares C.M.A."/>
            <person name="Soares R.B.A."/>
            <person name="Souza E.M."/>
            <person name="Souza K.R.L."/>
            <person name="Souza R.C."/>
            <person name="Steffens M.B.R."/>
            <person name="Steindel M."/>
            <person name="Teixeira S.R."/>
            <person name="Urmenyi T."/>
            <person name="Vettore A."/>
            <person name="Wassem R."/>
            <person name="Zaha A."/>
            <person name="Simpson A.J.G."/>
        </authorList>
    </citation>
    <scope>NUCLEOTIDE SEQUENCE [LARGE SCALE GENOMIC DNA]</scope>
    <source>
        <strain>ATCC 12472 / DSM 30191 / JCM 1249 / CCUG 213 / NBRC 12614 / NCIMB 9131 / NCTC 9757 / MK</strain>
    </source>
</reference>
<keyword id="KW-0028">Amino-acid biosynthesis</keyword>
<keyword id="KW-0055">Arginine biosynthesis</keyword>
<keyword id="KW-0963">Cytoplasm</keyword>
<keyword id="KW-0456">Lyase</keyword>
<keyword id="KW-1185">Reference proteome</keyword>
<evidence type="ECO:0000255" key="1">
    <source>
        <dbReference type="HAMAP-Rule" id="MF_00006"/>
    </source>
</evidence>